<sequence length="122" mass="13905">MARLAGVDLPREKRMEVALTYIFGIGPARSKELLEKTGISPDLRSKDLTDEQLSALRDVIENTWKVEGDLRREIQADIRRKIEIGSYQGLRHRRGLPVRGQRTKTNARTRKGPKKTIAGKKK</sequence>
<protein>
    <recommendedName>
        <fullName evidence="1">Small ribosomal subunit protein uS13</fullName>
    </recommendedName>
    <alternativeName>
        <fullName evidence="3">30S ribosomal protein S13</fullName>
    </alternativeName>
</protein>
<comment type="function">
    <text evidence="1">Located at the top of the head of the 30S subunit, it contacts several helices of the 16S rRNA. In the 70S ribosome it contacts the 23S rRNA (bridge B1a) and protein L5 of the 50S subunit (bridge B1b), connecting the 2 subunits; these bridges are implicated in subunit movement. Contacts the tRNAs in the A and P-sites.</text>
</comment>
<comment type="subunit">
    <text evidence="1">Part of the 30S ribosomal subunit. Forms a loose heterodimer with protein S19. Forms two bridges to the 50S subunit in the 70S ribosome.</text>
</comment>
<comment type="similarity">
    <text evidence="1">Belongs to the universal ribosomal protein uS13 family.</text>
</comment>
<gene>
    <name evidence="1" type="primary">rpsM</name>
    <name type="ordered locus">jk1761</name>
</gene>
<name>RS13_CORJK</name>
<dbReference type="EMBL" id="CR931997">
    <property type="protein sequence ID" value="CAI37938.1"/>
    <property type="molecule type" value="Genomic_DNA"/>
</dbReference>
<dbReference type="RefSeq" id="WP_005291872.1">
    <property type="nucleotide sequence ID" value="NC_007164.1"/>
</dbReference>
<dbReference type="SMR" id="Q4JTB9"/>
<dbReference type="STRING" id="306537.jk1761"/>
<dbReference type="GeneID" id="92739397"/>
<dbReference type="KEGG" id="cjk:jk1761"/>
<dbReference type="eggNOG" id="COG0099">
    <property type="taxonomic scope" value="Bacteria"/>
</dbReference>
<dbReference type="HOGENOM" id="CLU_103849_1_2_11"/>
<dbReference type="OrthoDB" id="9803610at2"/>
<dbReference type="Proteomes" id="UP000000545">
    <property type="component" value="Chromosome"/>
</dbReference>
<dbReference type="GO" id="GO:0005829">
    <property type="term" value="C:cytosol"/>
    <property type="evidence" value="ECO:0007669"/>
    <property type="project" value="TreeGrafter"/>
</dbReference>
<dbReference type="GO" id="GO:0015935">
    <property type="term" value="C:small ribosomal subunit"/>
    <property type="evidence" value="ECO:0007669"/>
    <property type="project" value="TreeGrafter"/>
</dbReference>
<dbReference type="GO" id="GO:0019843">
    <property type="term" value="F:rRNA binding"/>
    <property type="evidence" value="ECO:0007669"/>
    <property type="project" value="UniProtKB-UniRule"/>
</dbReference>
<dbReference type="GO" id="GO:0003735">
    <property type="term" value="F:structural constituent of ribosome"/>
    <property type="evidence" value="ECO:0007669"/>
    <property type="project" value="InterPro"/>
</dbReference>
<dbReference type="GO" id="GO:0000049">
    <property type="term" value="F:tRNA binding"/>
    <property type="evidence" value="ECO:0007669"/>
    <property type="project" value="UniProtKB-UniRule"/>
</dbReference>
<dbReference type="GO" id="GO:0006412">
    <property type="term" value="P:translation"/>
    <property type="evidence" value="ECO:0007669"/>
    <property type="project" value="UniProtKB-UniRule"/>
</dbReference>
<dbReference type="FunFam" id="1.10.8.50:FF:000001">
    <property type="entry name" value="30S ribosomal protein S13"/>
    <property type="match status" value="1"/>
</dbReference>
<dbReference type="FunFam" id="4.10.910.10:FF:000001">
    <property type="entry name" value="30S ribosomal protein S13"/>
    <property type="match status" value="1"/>
</dbReference>
<dbReference type="Gene3D" id="1.10.8.50">
    <property type="match status" value="1"/>
</dbReference>
<dbReference type="Gene3D" id="4.10.910.10">
    <property type="entry name" value="30s ribosomal protein s13, domain 2"/>
    <property type="match status" value="1"/>
</dbReference>
<dbReference type="HAMAP" id="MF_01315">
    <property type="entry name" value="Ribosomal_uS13"/>
    <property type="match status" value="1"/>
</dbReference>
<dbReference type="InterPro" id="IPR027437">
    <property type="entry name" value="Rbsml_uS13_C"/>
</dbReference>
<dbReference type="InterPro" id="IPR001892">
    <property type="entry name" value="Ribosomal_uS13"/>
</dbReference>
<dbReference type="InterPro" id="IPR010979">
    <property type="entry name" value="Ribosomal_uS13-like_H2TH"/>
</dbReference>
<dbReference type="InterPro" id="IPR019980">
    <property type="entry name" value="Ribosomal_uS13_bac-type"/>
</dbReference>
<dbReference type="InterPro" id="IPR018269">
    <property type="entry name" value="Ribosomal_uS13_CS"/>
</dbReference>
<dbReference type="NCBIfam" id="TIGR03631">
    <property type="entry name" value="uS13_bact"/>
    <property type="match status" value="1"/>
</dbReference>
<dbReference type="PANTHER" id="PTHR10871">
    <property type="entry name" value="30S RIBOSOMAL PROTEIN S13/40S RIBOSOMAL PROTEIN S18"/>
    <property type="match status" value="1"/>
</dbReference>
<dbReference type="PANTHER" id="PTHR10871:SF1">
    <property type="entry name" value="SMALL RIBOSOMAL SUBUNIT PROTEIN US13M"/>
    <property type="match status" value="1"/>
</dbReference>
<dbReference type="Pfam" id="PF00416">
    <property type="entry name" value="Ribosomal_S13"/>
    <property type="match status" value="1"/>
</dbReference>
<dbReference type="PIRSF" id="PIRSF002134">
    <property type="entry name" value="Ribosomal_S13"/>
    <property type="match status" value="1"/>
</dbReference>
<dbReference type="SUPFAM" id="SSF46946">
    <property type="entry name" value="S13-like H2TH domain"/>
    <property type="match status" value="1"/>
</dbReference>
<dbReference type="PROSITE" id="PS00646">
    <property type="entry name" value="RIBOSOMAL_S13_1"/>
    <property type="match status" value="1"/>
</dbReference>
<dbReference type="PROSITE" id="PS50159">
    <property type="entry name" value="RIBOSOMAL_S13_2"/>
    <property type="match status" value="1"/>
</dbReference>
<evidence type="ECO:0000255" key="1">
    <source>
        <dbReference type="HAMAP-Rule" id="MF_01315"/>
    </source>
</evidence>
<evidence type="ECO:0000256" key="2">
    <source>
        <dbReference type="SAM" id="MobiDB-lite"/>
    </source>
</evidence>
<evidence type="ECO:0000305" key="3"/>
<feature type="chain" id="PRO_0000230496" description="Small ribosomal subunit protein uS13">
    <location>
        <begin position="1"/>
        <end position="122"/>
    </location>
</feature>
<feature type="region of interest" description="Disordered" evidence="2">
    <location>
        <begin position="93"/>
        <end position="122"/>
    </location>
</feature>
<organism>
    <name type="scientific">Corynebacterium jeikeium (strain K411)</name>
    <dbReference type="NCBI Taxonomy" id="306537"/>
    <lineage>
        <taxon>Bacteria</taxon>
        <taxon>Bacillati</taxon>
        <taxon>Actinomycetota</taxon>
        <taxon>Actinomycetes</taxon>
        <taxon>Mycobacteriales</taxon>
        <taxon>Corynebacteriaceae</taxon>
        <taxon>Corynebacterium</taxon>
    </lineage>
</organism>
<proteinExistence type="inferred from homology"/>
<reference key="1">
    <citation type="journal article" date="2005" name="J. Bacteriol.">
        <title>Complete genome sequence and analysis of the multiresistant nosocomial pathogen Corynebacterium jeikeium K411, a lipid-requiring bacterium of the human skin flora.</title>
        <authorList>
            <person name="Tauch A."/>
            <person name="Kaiser O."/>
            <person name="Hain T."/>
            <person name="Goesmann A."/>
            <person name="Weisshaar B."/>
            <person name="Albersmeier A."/>
            <person name="Bekel T."/>
            <person name="Bischoff N."/>
            <person name="Brune I."/>
            <person name="Chakraborty T."/>
            <person name="Kalinowski J."/>
            <person name="Meyer F."/>
            <person name="Rupp O."/>
            <person name="Schneiker S."/>
            <person name="Viehoever P."/>
            <person name="Puehler A."/>
        </authorList>
    </citation>
    <scope>NUCLEOTIDE SEQUENCE [LARGE SCALE GENOMIC DNA]</scope>
    <source>
        <strain>K411</strain>
    </source>
</reference>
<accession>Q4JTB9</accession>
<keyword id="KW-1185">Reference proteome</keyword>
<keyword id="KW-0687">Ribonucleoprotein</keyword>
<keyword id="KW-0689">Ribosomal protein</keyword>
<keyword id="KW-0694">RNA-binding</keyword>
<keyword id="KW-0699">rRNA-binding</keyword>
<keyword id="KW-0820">tRNA-binding</keyword>